<gene>
    <name evidence="6" type="primary">scc-2</name>
    <name evidence="8" type="synonym">pqn-85</name>
    <name evidence="8" type="ORF">Y43H11AL.3</name>
</gene>
<evidence type="ECO:0000250" key="1">
    <source>
        <dbReference type="UniProtKB" id="Q6KC79"/>
    </source>
</evidence>
<evidence type="ECO:0000256" key="2">
    <source>
        <dbReference type="SAM" id="MobiDB-lite"/>
    </source>
</evidence>
<evidence type="ECO:0000269" key="3">
    <source>
    </source>
</evidence>
<evidence type="ECO:0000269" key="4">
    <source>
    </source>
</evidence>
<evidence type="ECO:0000269" key="5">
    <source>
    </source>
</evidence>
<evidence type="ECO:0000303" key="6">
    <source>
    </source>
</evidence>
<evidence type="ECO:0000305" key="7"/>
<evidence type="ECO:0000312" key="8">
    <source>
        <dbReference type="WormBase" id="Y43H11AL.3a"/>
    </source>
</evidence>
<evidence type="ECO:0000312" key="9">
    <source>
        <dbReference type="WormBase" id="Y43H11AL.3b"/>
    </source>
</evidence>
<reference key="1">
    <citation type="journal article" date="1998" name="Science">
        <title>Genome sequence of the nematode C. elegans: a platform for investigating biology.</title>
        <authorList>
            <consortium name="The C. elegans sequencing consortium"/>
        </authorList>
    </citation>
    <scope>NUCLEOTIDE SEQUENCE [LARGE SCALE GENOMIC DNA]</scope>
    <source>
        <strain>Bristol N2</strain>
    </source>
</reference>
<reference key="2">
    <citation type="journal article" date="2004" name="Nat. Genet.">
        <title>NIPBL, encoding a homolog of fungal Scc2-type sister chromatid cohesion proteins and fly Nipped-B, is mutated in Cornelia de Lange syndrome.</title>
        <authorList>
            <person name="Tonkin E.T."/>
            <person name="Wang T.-J."/>
            <person name="Lisgo S."/>
            <person name="Bamshad M.J."/>
            <person name="Strachan T."/>
        </authorList>
    </citation>
    <scope>FUNCTION</scope>
    <scope>DISRUPTION PHENOTYPE</scope>
</reference>
<reference key="3">
    <citation type="journal article" date="2006" name="PLoS Biol.">
        <title>Metazoan Scc4 homologs link sister chromatid cohesion to cell and axon migration guidance.</title>
        <authorList>
            <person name="Seitan V.C."/>
            <person name="Banks P."/>
            <person name="Laval S."/>
            <person name="Majid N.A."/>
            <person name="Dorsett D."/>
            <person name="Rana A."/>
            <person name="Smith J."/>
            <person name="Bateman A."/>
            <person name="Krpic S."/>
            <person name="Hostert A."/>
            <person name="Rollins R.A."/>
            <person name="Erdjument-Bromage H."/>
            <person name="Tempst P."/>
            <person name="Benard C.Y."/>
            <person name="Hekimi S."/>
            <person name="Newbury S.F."/>
            <person name="Strachan T."/>
        </authorList>
    </citation>
    <scope>FUNCTION</scope>
    <scope>DISRUPTION PHENOTYPE</scope>
</reference>
<reference key="4">
    <citation type="journal article" date="2011" name="Curr. Biol.">
        <title>Loading of meiotic cohesin by SCC-2 is required for early processing of DSBs and for the DNA damage checkpoint.</title>
        <authorList>
            <person name="Lightfoot J."/>
            <person name="Testori S."/>
            <person name="Barroso C."/>
            <person name="Martinez-Perez E."/>
        </authorList>
    </citation>
    <scope>FUNCTION</scope>
    <scope>SUBCELLULAR LOCATION</scope>
    <scope>DISRUPTION PHENOTYPE</scope>
    <scope>MUTAGENESIS OF HIS-112</scope>
</reference>
<organism>
    <name type="scientific">Caenorhabditis elegans</name>
    <dbReference type="NCBI Taxonomy" id="6239"/>
    <lineage>
        <taxon>Eukaryota</taxon>
        <taxon>Metazoa</taxon>
        <taxon>Ecdysozoa</taxon>
        <taxon>Nematoda</taxon>
        <taxon>Chromadorea</taxon>
        <taxon>Rhabditida</taxon>
        <taxon>Rhabditina</taxon>
        <taxon>Rhabditomorpha</taxon>
        <taxon>Rhabditoidea</taxon>
        <taxon>Rhabditidae</taxon>
        <taxon>Peloderinae</taxon>
        <taxon>Caenorhabditis</taxon>
    </lineage>
</organism>
<keyword id="KW-0025">Alternative splicing</keyword>
<keyword id="KW-0131">Cell cycle</keyword>
<keyword id="KW-0158">Chromosome</keyword>
<keyword id="KW-0539">Nucleus</keyword>
<keyword id="KW-1185">Reference proteome</keyword>
<keyword id="KW-0677">Repeat</keyword>
<sequence length="2176" mass="249784">MDPNNLQNSLNGTGNPNFQPVQTNAGGFGHQMAQTGAAAAAAATGQYNPMLLQQQYLNFGFGMNYNNQLFDFQAQQQQQQQYLMQQQQQQQQLHHQQQQQHQNIAQPQAQHHQMNMFTQHQMLQLMQQQQQQQQQQPVQQIQRQQPIAQPIPQHTIPPSTSNQFQQQIQSAASSIFDSSVISSHQKLYEEQCRQIEKERKEQEERKRKQELEEQRKRNEELKRLRIAEEKRLLEEQQRLREQMERERLAEIKRLEEAARLEDERRIAADIEAQKQAMLQKMQAEQNKHIAEVERQRSELEERFARVSQPMTLVGTHFLPNFLDMIPFPYESMVDSTLPQVFDMERDSAILESCDPQMVATISNILNATNIDDIITRMDKLRPDDKETNDLFLDKLPPIIQAVVNYNTSALDVDSHNDMELLENEDVMMTEDITRTTAPSTSSSSYNNHHQNSIVMMTSSSVSMSEATQSSSVTMNHHDVDEEGPAPISIEKRRQMMSVGKAPKAGGGGGQNQRKKRDMVENLYDSLTDNFVPTDTGRRGRRRGRGSDDDEDELLQRDLKLIEEMEKGVKLPASVTGFTTTEEDVQHFFGSQKKRRKEDRIRKDRSPTPEDVIESRDAEWQERLRLKMEREKSRKADEESQNAWSLQALADNETFTRFCQTVDGVLEQGDSLDTELKMPKNKKRRSGGDHHHKGDENSDESDEEEEMDEIDPDLRIELYILEELRRGSARLRENHALQAVGADKLLKLVAMLDRNIRDAISADNQRLLVPCDDDVDVGDVLEKEICEERVKRASDAAVVALNIMSSHRMHKQVIIEDVIDRCVGLTRLLLIHLIYPASDSIYKSVNSKKKDRAPEEARRRKKAGVCTRDKFSEYIYERITEAIGLLAVLVKSESMTDTSVHNVASVALTPFFVANVGSLQITAMLLASNIFSRAEDSLRFSMITDLLSSLHRAPQFTQKNSNNGYSLPDGSWISTTTALFIQLVQSTIKIPKFKKHADEDELAKRSKKEEAMVKEGFLKASKVTNAFLNGFLAKCSQKGNKMDGEEDYRILFSNFLQELLSALYSPEWPAAEMILTALGSLLVKNFRSKSSDMTIRQASLDYLGNITAKLRKDQKEAIAGERRLDAVVKKSFLLLSDKGVEDYESVDISNLKQNDKLKVLETSLIDYLVITNSSDIIVYACNFYVGEWYKEVAEDLESARSKLKQTVDTNESEKDVKKAERKYEKIQYRGAEMKVFLSKILDKKEIKRRLEKSNKVKMLDSDAFWAVKFLAQSREFTHSFDTYLKHIVFGAGSETIVALRSKALKCLSSIIEADSSVLILEDVQQAVHTRMVDSHAQVRESAVELIGRFVLYDEEYVRKYYSQIAERILDTGVAVRKRVIRIMREICEKFPTFEMIPDMLARMIRRVTDEEGVKKLVFETFTTLWFQPVDTRIYTNAVATKVTTMCSVAQHCIKDAMSDYLEQLILHIVKNGQEGSGMSVAVKQIIDSLVDHILNLEQHKSSENVSEVELMRRKEQEEKYMAYLSTLAVFSKIRPLLLTSHVEVLLPYLTFSGAKTNAENQVTKEMIGMLERVIPLVPFPSNIVLDSIDENLCKVIMFNGMALVVSAVSCVASIYKKFKRGATKTIDVFSTYLKHLEVIKRNFDSNPRYDLDPKLFPILSRSIFTLGVLSRYFQFEEFVKEDPTEEKVEALKEKVFITLEFFSRYHKGGLRQKALTAMGHFCAQHSTYLTKRQLTNTYLEILNAANSPQQQQQRILVLQNLEMFLQCEEQKLAASHDKWDENKEAQNLKEMELSGSGLGSSVIQKYWKAVLESYVDADIQLRRAAVQVVWLTLNQGLVTPGASIPTLIAMTTDPVDVIRNRIDILLKEIDSKYSGMVQSKAMQGVRLSYKLHLKLRMLQQEKFVRGFRFCDFHLNTLPNALPEKTHDGMAVLSGLYQSLRTNRQQRRSFLQSMVKLFSEEFSHDKPQLMEYIFIADNLAMFPYQMIDEPLYVMRQIDQNIAQTGQSLLVQYKLQLRMQESEDEDIVFLDENMMSRLSQLGQIETFHQLFLDSQVPSLLLYVRTFLMQLYGFNETKVAEYQPSEAAKVYEKAVTRRNIHMFKPITALEALNFPFEWGSFQHTAFLAEKICSFRKMLLSLDQVEEVEVSNTITAANDDYDEEEDGGEDSRGPIMEQMEH</sequence>
<accession>Q95XZ5</accession>
<accession>A0A0K3AU30</accession>
<name>NIPBL_CAEEL</name>
<feature type="chain" id="PRO_0000218598" description="Nipped-B-like protein scc-2">
    <location>
        <begin position="1"/>
        <end position="2176"/>
    </location>
</feature>
<feature type="repeat" description="HEAT 1">
    <location>
        <begin position="1280"/>
        <end position="1312"/>
    </location>
</feature>
<feature type="repeat" description="HEAT 2">
    <location>
        <begin position="1320"/>
        <end position="1351"/>
    </location>
</feature>
<feature type="repeat" description="HEAT 3">
    <location>
        <begin position="1353"/>
        <end position="1388"/>
    </location>
</feature>
<feature type="repeat" description="HEAT 4">
    <location>
        <begin position="1393"/>
        <end position="1426"/>
    </location>
</feature>
<feature type="repeat" description="HEAT 5">
    <location>
        <begin position="1692"/>
        <end position="1723"/>
    </location>
</feature>
<feature type="repeat" description="HEAT 6">
    <location>
        <begin position="1803"/>
        <end position="1834"/>
    </location>
</feature>
<feature type="repeat" description="HEAT 7">
    <location>
        <begin position="1840"/>
        <end position="1871"/>
    </location>
</feature>
<feature type="region of interest" description="Disordered" evidence="2">
    <location>
        <begin position="1"/>
        <end position="27"/>
    </location>
</feature>
<feature type="region of interest" description="Disordered" evidence="2">
    <location>
        <begin position="150"/>
        <end position="170"/>
    </location>
</feature>
<feature type="region of interest" description="Disordered" evidence="2">
    <location>
        <begin position="464"/>
        <end position="483"/>
    </location>
</feature>
<feature type="region of interest" description="Disordered" evidence="2">
    <location>
        <begin position="495"/>
        <end position="514"/>
    </location>
</feature>
<feature type="region of interest" description="Disordered" evidence="2">
    <location>
        <begin position="523"/>
        <end position="551"/>
    </location>
</feature>
<feature type="region of interest" description="Disordered" evidence="2">
    <location>
        <begin position="585"/>
        <end position="615"/>
    </location>
</feature>
<feature type="region of interest" description="Disordered" evidence="2">
    <location>
        <begin position="669"/>
        <end position="708"/>
    </location>
</feature>
<feature type="region of interest" description="Disordered" evidence="2">
    <location>
        <begin position="2149"/>
        <end position="2176"/>
    </location>
</feature>
<feature type="compositionally biased region" description="Polar residues" evidence="2">
    <location>
        <begin position="1"/>
        <end position="25"/>
    </location>
</feature>
<feature type="compositionally biased region" description="Low complexity" evidence="2">
    <location>
        <begin position="464"/>
        <end position="473"/>
    </location>
</feature>
<feature type="compositionally biased region" description="Basic and acidic residues" evidence="2">
    <location>
        <begin position="597"/>
        <end position="615"/>
    </location>
</feature>
<feature type="compositionally biased region" description="Basic and acidic residues" evidence="2">
    <location>
        <begin position="685"/>
        <end position="695"/>
    </location>
</feature>
<feature type="compositionally biased region" description="Acidic residues" evidence="2">
    <location>
        <begin position="696"/>
        <end position="708"/>
    </location>
</feature>
<feature type="compositionally biased region" description="Acidic residues" evidence="2">
    <location>
        <begin position="2154"/>
        <end position="2163"/>
    </location>
</feature>
<feature type="splice variant" id="VSP_061056" description="In isoform b." evidence="7">
    <location>
        <begin position="1"/>
        <end position="1761"/>
    </location>
</feature>
<feature type="mutagenesis site" description="In fq1; cytological defects in the pachytene and diakinesis phases of meiotic prophase in the germline. Abolishes loading of cohesin complex components smc-1, smc-3 and rec-8 onto the to the axial element of meiotic chromosomes in the germline, however these subunits do accumulate in the mitotic nuclei and the meiotic S phase nuclei that precede the start of meiotic prophase. Abrogates assembly of the synaptonemal complex between homologous chromosomes. Does not affect the loading of condensin and the smc-5/6 complex onto meiotic chromosomes. Defective DNA double-strand break repair during meiosis resulting in an accumulation of rad-51-positive recombination intermediates and elongated rad-51-positive recombination structures in the mid and late pachytene region of the germline. No increase in apoptosis in response to the accumulation of recombination intermediates, indicative of a defective DNA damage response. Furthermore, hus-1, a component of the 9-1-1 cell-cycle checkpoint response complex which is required for inducing apoptosis in response to DNA damage, does not accumulate on the recombination intermediates." evidence="5">
    <original>H</original>
    <variation>Y</variation>
    <location>
        <position position="112"/>
    </location>
</feature>
<proteinExistence type="evidence at protein level"/>
<protein>
    <recommendedName>
        <fullName evidence="7">Nipped-B-like protein scc-2</fullName>
    </recommendedName>
    <alternativeName>
        <fullName>Prion-like-(Q/N-rich) domain-bearing protein 85</fullName>
    </alternativeName>
    <alternativeName>
        <fullName>SCC2 homolog</fullName>
    </alternativeName>
</protein>
<dbReference type="EMBL" id="BX284602">
    <property type="protein sequence ID" value="CCD71490.2"/>
    <property type="molecule type" value="Genomic_DNA"/>
</dbReference>
<dbReference type="EMBL" id="BX284602">
    <property type="protein sequence ID" value="CTQ86543.1"/>
    <property type="molecule type" value="Genomic_DNA"/>
</dbReference>
<dbReference type="RefSeq" id="NP_001300604.1">
    <molecule id="Q95XZ5-2"/>
    <property type="nucleotide sequence ID" value="NM_001313675.3"/>
</dbReference>
<dbReference type="RefSeq" id="NP_001364775.1">
    <molecule id="Q95XZ5-1"/>
    <property type="nucleotide sequence ID" value="NM_001377684.4"/>
</dbReference>
<dbReference type="RefSeq" id="NP_493687.2">
    <property type="nucleotide sequence ID" value="NM_061286.3"/>
</dbReference>
<dbReference type="SMR" id="Q95XZ5"/>
<dbReference type="BioGRID" id="38788">
    <property type="interactions" value="4"/>
</dbReference>
<dbReference type="FunCoup" id="Q95XZ5">
    <property type="interactions" value="2998"/>
</dbReference>
<dbReference type="IntAct" id="Q95XZ5">
    <property type="interactions" value="2"/>
</dbReference>
<dbReference type="STRING" id="6239.Y43H11AL.3a.1"/>
<dbReference type="iPTMnet" id="Q95XZ5"/>
<dbReference type="PaxDb" id="6239-Y43H11AL.3"/>
<dbReference type="PeptideAtlas" id="Q95XZ5"/>
<dbReference type="EnsemblMetazoa" id="Y43H11AL.3a.1">
    <molecule id="Q95XZ5-1"/>
    <property type="protein sequence ID" value="Y43H11AL.3a.1"/>
    <property type="gene ID" value="WBGene00004166"/>
</dbReference>
<dbReference type="EnsemblMetazoa" id="Y43H11AL.3a.2">
    <molecule id="Q95XZ5-1"/>
    <property type="protein sequence ID" value="Y43H11AL.3a.2"/>
    <property type="gene ID" value="WBGene00004166"/>
</dbReference>
<dbReference type="EnsemblMetazoa" id="Y43H11AL.3b.1">
    <molecule id="Q95XZ5-2"/>
    <property type="protein sequence ID" value="Y43H11AL.3b.1"/>
    <property type="gene ID" value="WBGene00004166"/>
</dbReference>
<dbReference type="GeneID" id="173410"/>
<dbReference type="KEGG" id="cel:CELE_Y43H11AL.3"/>
<dbReference type="UCSC" id="Y43H11AL.3">
    <molecule id="Q95XZ5-1"/>
    <property type="organism name" value="c. elegans"/>
</dbReference>
<dbReference type="AGR" id="WB:WBGene00004166"/>
<dbReference type="CTD" id="173410"/>
<dbReference type="WormBase" id="Y43H11AL.3a">
    <molecule id="Q95XZ5-1"/>
    <property type="protein sequence ID" value="CE53800"/>
    <property type="gene ID" value="WBGene00004166"/>
    <property type="gene designation" value="scc-2"/>
</dbReference>
<dbReference type="WormBase" id="Y43H11AL.3b">
    <molecule id="Q95XZ5-2"/>
    <property type="protein sequence ID" value="CE50846"/>
    <property type="gene ID" value="WBGene00004166"/>
    <property type="gene designation" value="scc-2"/>
</dbReference>
<dbReference type="eggNOG" id="KOG1020">
    <property type="taxonomic scope" value="Eukaryota"/>
</dbReference>
<dbReference type="GeneTree" id="ENSGT00390000010427"/>
<dbReference type="HOGENOM" id="CLU_000763_1_1_1"/>
<dbReference type="InParanoid" id="Q95XZ5"/>
<dbReference type="OrthoDB" id="418242at2759"/>
<dbReference type="PhylomeDB" id="Q95XZ5"/>
<dbReference type="Reactome" id="R-CEL-2470946">
    <property type="pathway name" value="Cohesin Loading onto Chromatin"/>
</dbReference>
<dbReference type="PRO" id="PR:Q95XZ5"/>
<dbReference type="Proteomes" id="UP000001940">
    <property type="component" value="Chromosome II"/>
</dbReference>
<dbReference type="Bgee" id="WBGene00004166">
    <property type="expression patterns" value="Expressed in adult organism and 4 other cell types or tissues"/>
</dbReference>
<dbReference type="ExpressionAtlas" id="Q95XZ5">
    <property type="expression patterns" value="baseline and differential"/>
</dbReference>
<dbReference type="GO" id="GO:0005694">
    <property type="term" value="C:chromosome"/>
    <property type="evidence" value="ECO:0000314"/>
    <property type="project" value="UniProtKB"/>
</dbReference>
<dbReference type="GO" id="GO:0005634">
    <property type="term" value="C:nucleus"/>
    <property type="evidence" value="ECO:0000314"/>
    <property type="project" value="UniProtKB"/>
</dbReference>
<dbReference type="GO" id="GO:0090694">
    <property type="term" value="C:Scc2-Scc4 cohesin loading complex"/>
    <property type="evidence" value="ECO:0000318"/>
    <property type="project" value="GO_Central"/>
</dbReference>
<dbReference type="GO" id="GO:0032116">
    <property type="term" value="C:SMC loading complex"/>
    <property type="evidence" value="ECO:0000250"/>
    <property type="project" value="UniProtKB"/>
</dbReference>
<dbReference type="GO" id="GO:0003682">
    <property type="term" value="F:chromatin binding"/>
    <property type="evidence" value="ECO:0000318"/>
    <property type="project" value="GO_Central"/>
</dbReference>
<dbReference type="GO" id="GO:0061775">
    <property type="term" value="F:cohesin loader activity"/>
    <property type="evidence" value="ECO:0000315"/>
    <property type="project" value="UniProtKB"/>
</dbReference>
<dbReference type="GO" id="GO:0140588">
    <property type="term" value="P:chromatin looping"/>
    <property type="evidence" value="ECO:0007669"/>
    <property type="project" value="InterPro"/>
</dbReference>
<dbReference type="GO" id="GO:0070192">
    <property type="term" value="P:chromosome organization involved in meiotic cell cycle"/>
    <property type="evidence" value="ECO:0000315"/>
    <property type="project" value="UniProtKB"/>
</dbReference>
<dbReference type="GO" id="GO:1990918">
    <property type="term" value="P:double-strand break repair involved in meiotic recombination"/>
    <property type="evidence" value="ECO:0000315"/>
    <property type="project" value="UniProtKB"/>
</dbReference>
<dbReference type="GO" id="GO:0009792">
    <property type="term" value="P:embryo development ending in birth or egg hatching"/>
    <property type="evidence" value="ECO:0000315"/>
    <property type="project" value="WormBase"/>
</dbReference>
<dbReference type="GO" id="GO:0034087">
    <property type="term" value="P:establishment of mitotic sister chromatid cohesion"/>
    <property type="evidence" value="ECO:0000318"/>
    <property type="project" value="GO_Central"/>
</dbReference>
<dbReference type="GO" id="GO:0071169">
    <property type="term" value="P:establishment of protein localization to chromatin"/>
    <property type="evidence" value="ECO:0000318"/>
    <property type="project" value="GO_Central"/>
</dbReference>
<dbReference type="GO" id="GO:0034088">
    <property type="term" value="P:maintenance of mitotic sister chromatid cohesion"/>
    <property type="evidence" value="ECO:0000250"/>
    <property type="project" value="UniProtKB"/>
</dbReference>
<dbReference type="GO" id="GO:0051177">
    <property type="term" value="P:meiotic sister chromatid cohesion"/>
    <property type="evidence" value="ECO:0000315"/>
    <property type="project" value="UniProtKB"/>
</dbReference>
<dbReference type="GO" id="GO:0000070">
    <property type="term" value="P:mitotic sister chromatid segregation"/>
    <property type="evidence" value="ECO:0000315"/>
    <property type="project" value="WormBase"/>
</dbReference>
<dbReference type="GO" id="GO:1905088">
    <property type="term" value="P:positive regulation of synaptonemal complex assembly"/>
    <property type="evidence" value="ECO:0000315"/>
    <property type="project" value="UniProtKB"/>
</dbReference>
<dbReference type="GO" id="GO:2000001">
    <property type="term" value="P:regulation of DNA damage checkpoint"/>
    <property type="evidence" value="ECO:0000315"/>
    <property type="project" value="UniProtKB"/>
</dbReference>
<dbReference type="GO" id="GO:0010468">
    <property type="term" value="P:regulation of gene expression"/>
    <property type="evidence" value="ECO:0007669"/>
    <property type="project" value="InterPro"/>
</dbReference>
<dbReference type="GO" id="GO:1990414">
    <property type="term" value="P:replication-born double-strand break repair via sister chromatid exchange"/>
    <property type="evidence" value="ECO:0000318"/>
    <property type="project" value="GO_Central"/>
</dbReference>
<dbReference type="CDD" id="cd23958">
    <property type="entry name" value="SCC2"/>
    <property type="match status" value="1"/>
</dbReference>
<dbReference type="Gene3D" id="1.25.10.10">
    <property type="entry name" value="Leucine-rich Repeat Variant"/>
    <property type="match status" value="1"/>
</dbReference>
<dbReference type="InterPro" id="IPR011989">
    <property type="entry name" value="ARM-like"/>
</dbReference>
<dbReference type="InterPro" id="IPR016024">
    <property type="entry name" value="ARM-type_fold"/>
</dbReference>
<dbReference type="InterPro" id="IPR026003">
    <property type="entry name" value="Cohesin_HEAT"/>
</dbReference>
<dbReference type="InterPro" id="IPR024986">
    <property type="entry name" value="Nipped-B_C"/>
</dbReference>
<dbReference type="InterPro" id="IPR033031">
    <property type="entry name" value="Scc2/Nipped-B"/>
</dbReference>
<dbReference type="PANTHER" id="PTHR21704:SF18">
    <property type="entry name" value="NIPPED-B-LIKE PROTEIN"/>
    <property type="match status" value="1"/>
</dbReference>
<dbReference type="PANTHER" id="PTHR21704">
    <property type="entry name" value="NIPPED-B-LIKE PROTEIN DELANGIN SCC2-RELATED"/>
    <property type="match status" value="1"/>
</dbReference>
<dbReference type="Pfam" id="PF12765">
    <property type="entry name" value="Cohesin_HEAT"/>
    <property type="match status" value="1"/>
</dbReference>
<dbReference type="Pfam" id="PF12830">
    <property type="entry name" value="Nipped-B_C"/>
    <property type="match status" value="1"/>
</dbReference>
<dbReference type="SUPFAM" id="SSF48371">
    <property type="entry name" value="ARM repeat"/>
    <property type="match status" value="1"/>
</dbReference>
<comment type="function">
    <text evidence="1 3 4 5">Plays an important role in the loading of the cohesin complex on to meiotic chromosomes (PubMed:21856158). Forms a heterodimeric complex (also known as cohesin loading complex) with mau-2/SCC4 which mediates the loading of the cohesin complex onto chromatin (By similarity). Plays an essential role in cell division during embryonic development (PubMed:15146185, PubMed:16802858). Promotes normal chromosome organization during meiosis (PubMed:21856158). Required for the assembly of the synaptonemal complex between homologous chromosomes to promote sister chromatid cohesion during meiosis (PubMed:21856158). Required for chromosome segregation during mitosis and meiosis (PubMed:16802858). Plays a role in DNA double-strand break (DSB) repair during meiotic recombination and promotes the assembly of the 9-1-1 cell-cycle checkpoint response complex which is required for inducing apoptosis in response to DNA damage, at DNA damage sites (PubMed:21856158).</text>
</comment>
<comment type="subunit">
    <text evidence="1">May heterodimerize with mau-2/SCC4 to form the cohesin loading complex.</text>
</comment>
<comment type="subcellular location">
    <subcellularLocation>
        <location evidence="5">Nucleus</location>
    </subcellularLocation>
    <subcellularLocation>
        <location evidence="5">Chromosome</location>
    </subcellularLocation>
    <text evidence="5">Localizes to pachytene nuclei in germlines (PubMed:21856158). Localizes to the axial element of meiotic chromosomes in germlines (PubMed:21856158).</text>
</comment>
<comment type="alternative products">
    <event type="alternative splicing"/>
    <isoform>
        <id>Q95XZ5-1</id>
        <name evidence="8">a</name>
        <sequence type="displayed"/>
    </isoform>
    <isoform>
        <id>Q95XZ5-2</id>
        <name evidence="9">b</name>
        <sequence type="described" ref="VSP_061056"/>
    </isoform>
</comment>
<comment type="disruption phenotype">
    <text evidence="3 4 5">RNAi-mediated knockdown results in 100% embryonic lethality (PubMed:15146185, PubMed:16802858). Any survivors display a paralyzed uncoordinated phenotype, body morphology defects and sometimes a vulval defect (PubMed:15146185). RNAi-mediated knockdown results in chromosome segregation defects in early embryos with lagging chromosomes at the anaphase phase of mitosis (PubMed:16802858). RNAi-mediated knockdown results in cytological defects in the pachytene and diakinesis phases of meiosis in the germline (PubMed:21856158). RNAi-mediated knockdown abolishes loading of cohesin complex components smc-1, smc-3 and rec-8 onto the to the axial element of meiotic chromosomes in the germline, however these subunits do accumulate in the mitotic nuclei and the meiotic S phase nuclei that precede the start of meiotic prophase (PubMed:21856158). RNAi-mediated knockdown results in defective DNA double-strand break repair during meiosis resulting in an accumulation of rad-51-positive recombination intermediates and elongated rad-51-positive recombination structures in the mid and late pachytene region of the germline (PubMed:21856158). There is an increase in apoptosis in response to the accumulation of recombination intermediates, but only in the presence of smc-1, indicative of a defective DNA damage response (PubMed:21856158).</text>
</comment>
<comment type="similarity">
    <text evidence="7">Belongs to the SCC2/Nipped-B family.</text>
</comment>